<evidence type="ECO:0000255" key="1">
    <source>
        <dbReference type="HAMAP-Rule" id="MF_00011"/>
    </source>
</evidence>
<sequence>MNNIVIVGLQWGDEGKGKIVDYLSENADVVVRFQGGNNAGHTIVIDDEVYKLNLLPSAVLRADKISIIGNGVALDSHALVSEIESLKVKGVDVNYNNLMVSESCPLILSVHKDKEKLFEDLNGNHKIGTTNKGIGPCYEDKVGRRAIRLCDLENTDELNQRVDALLSYHNAIRKGLNYQVVKKEEILKEIQEISEKILLYKKPVWKILNDFMKEGKKIIFEGAQGAFLDIDHGTYPFVTSSNTVASQAITGSGLSYNAQIIGVAKAYTTRVGNGPFPTEQNNEIGDSLFSIGKELGTVSNRRRRCGWFDAVLVRQAVQLSGVSSIVLTKLDILDSFDTIKIGTGYKYGGKMYDYLPASHSIQKELEPIYEEFPGWKEKTQGKRSVKELPANLMKYVRKIEELIGVPIHLISTSPNREDVIKLKNL</sequence>
<comment type="function">
    <text evidence="1">Plays an important role in the de novo pathway of purine nucleotide biosynthesis. Catalyzes the first committed step in the biosynthesis of AMP from IMP.</text>
</comment>
<comment type="catalytic activity">
    <reaction evidence="1">
        <text>IMP + L-aspartate + GTP = N(6)-(1,2-dicarboxyethyl)-AMP + GDP + phosphate + 2 H(+)</text>
        <dbReference type="Rhea" id="RHEA:15753"/>
        <dbReference type="ChEBI" id="CHEBI:15378"/>
        <dbReference type="ChEBI" id="CHEBI:29991"/>
        <dbReference type="ChEBI" id="CHEBI:37565"/>
        <dbReference type="ChEBI" id="CHEBI:43474"/>
        <dbReference type="ChEBI" id="CHEBI:57567"/>
        <dbReference type="ChEBI" id="CHEBI:58053"/>
        <dbReference type="ChEBI" id="CHEBI:58189"/>
        <dbReference type="EC" id="6.3.4.4"/>
    </reaction>
</comment>
<comment type="cofactor">
    <cofactor evidence="1">
        <name>Mg(2+)</name>
        <dbReference type="ChEBI" id="CHEBI:18420"/>
    </cofactor>
    <text evidence="1">Binds 1 Mg(2+) ion per subunit.</text>
</comment>
<comment type="pathway">
    <text evidence="1">Purine metabolism; AMP biosynthesis via de novo pathway; AMP from IMP: step 1/2.</text>
</comment>
<comment type="subunit">
    <text evidence="1">Homodimer.</text>
</comment>
<comment type="subcellular location">
    <subcellularLocation>
        <location evidence="1">Cytoplasm</location>
    </subcellularLocation>
</comment>
<comment type="similarity">
    <text evidence="1">Belongs to the adenylosuccinate synthetase family.</text>
</comment>
<accession>B3CL83</accession>
<reference key="1">
    <citation type="journal article" date="2008" name="Mol. Biol. Evol.">
        <title>Genome evolution of Wolbachia strain wPip from the Culex pipiens group.</title>
        <authorList>
            <person name="Klasson L."/>
            <person name="Walker T."/>
            <person name="Sebaihia M."/>
            <person name="Sanders M.J."/>
            <person name="Quail M.A."/>
            <person name="Lord A."/>
            <person name="Sanders S."/>
            <person name="Earl J."/>
            <person name="O'Neill S.L."/>
            <person name="Thomson N."/>
            <person name="Sinkins S.P."/>
            <person name="Parkhill J."/>
        </authorList>
    </citation>
    <scope>NUCLEOTIDE SEQUENCE [LARGE SCALE GENOMIC DNA]</scope>
    <source>
        <strain>wPip</strain>
    </source>
</reference>
<feature type="chain" id="PRO_1000089351" description="Adenylosuccinate synthetase">
    <location>
        <begin position="1"/>
        <end position="425"/>
    </location>
</feature>
<feature type="active site" description="Proton acceptor" evidence="1">
    <location>
        <position position="13"/>
    </location>
</feature>
<feature type="active site" description="Proton donor" evidence="1">
    <location>
        <position position="41"/>
    </location>
</feature>
<feature type="binding site" evidence="1">
    <location>
        <begin position="12"/>
        <end position="18"/>
    </location>
    <ligand>
        <name>GTP</name>
        <dbReference type="ChEBI" id="CHEBI:37565"/>
    </ligand>
</feature>
<feature type="binding site" description="in other chain" evidence="1">
    <location>
        <begin position="13"/>
        <end position="16"/>
    </location>
    <ligand>
        <name>IMP</name>
        <dbReference type="ChEBI" id="CHEBI:58053"/>
        <note>ligand shared between dimeric partners</note>
    </ligand>
</feature>
<feature type="binding site" evidence="1">
    <location>
        <position position="13"/>
    </location>
    <ligand>
        <name>Mg(2+)</name>
        <dbReference type="ChEBI" id="CHEBI:18420"/>
    </ligand>
</feature>
<feature type="binding site" description="in other chain" evidence="1">
    <location>
        <begin position="38"/>
        <end position="41"/>
    </location>
    <ligand>
        <name>IMP</name>
        <dbReference type="ChEBI" id="CHEBI:58053"/>
        <note>ligand shared between dimeric partners</note>
    </ligand>
</feature>
<feature type="binding site" evidence="1">
    <location>
        <begin position="40"/>
        <end position="42"/>
    </location>
    <ligand>
        <name>GTP</name>
        <dbReference type="ChEBI" id="CHEBI:37565"/>
    </ligand>
</feature>
<feature type="binding site" evidence="1">
    <location>
        <position position="40"/>
    </location>
    <ligand>
        <name>Mg(2+)</name>
        <dbReference type="ChEBI" id="CHEBI:18420"/>
    </ligand>
</feature>
<feature type="binding site" description="in other chain" evidence="1">
    <location>
        <position position="130"/>
    </location>
    <ligand>
        <name>IMP</name>
        <dbReference type="ChEBI" id="CHEBI:58053"/>
        <note>ligand shared between dimeric partners</note>
    </ligand>
</feature>
<feature type="binding site" evidence="1">
    <location>
        <position position="144"/>
    </location>
    <ligand>
        <name>IMP</name>
        <dbReference type="ChEBI" id="CHEBI:58053"/>
        <note>ligand shared between dimeric partners</note>
    </ligand>
</feature>
<feature type="binding site" description="in other chain" evidence="1">
    <location>
        <position position="224"/>
    </location>
    <ligand>
        <name>IMP</name>
        <dbReference type="ChEBI" id="CHEBI:58053"/>
        <note>ligand shared between dimeric partners</note>
    </ligand>
</feature>
<feature type="binding site" description="in other chain" evidence="1">
    <location>
        <position position="239"/>
    </location>
    <ligand>
        <name>IMP</name>
        <dbReference type="ChEBI" id="CHEBI:58053"/>
        <note>ligand shared between dimeric partners</note>
    </ligand>
</feature>
<feature type="binding site" evidence="1">
    <location>
        <begin position="297"/>
        <end position="303"/>
    </location>
    <ligand>
        <name>substrate</name>
    </ligand>
</feature>
<feature type="binding site" description="in other chain" evidence="1">
    <location>
        <position position="301"/>
    </location>
    <ligand>
        <name>IMP</name>
        <dbReference type="ChEBI" id="CHEBI:58053"/>
        <note>ligand shared between dimeric partners</note>
    </ligand>
</feature>
<feature type="binding site" evidence="1">
    <location>
        <position position="303"/>
    </location>
    <ligand>
        <name>GTP</name>
        <dbReference type="ChEBI" id="CHEBI:37565"/>
    </ligand>
</feature>
<feature type="binding site" evidence="1">
    <location>
        <begin position="329"/>
        <end position="331"/>
    </location>
    <ligand>
        <name>GTP</name>
        <dbReference type="ChEBI" id="CHEBI:37565"/>
    </ligand>
</feature>
<feature type="binding site" evidence="1">
    <location>
        <begin position="411"/>
        <end position="413"/>
    </location>
    <ligand>
        <name>GTP</name>
        <dbReference type="ChEBI" id="CHEBI:37565"/>
    </ligand>
</feature>
<proteinExistence type="inferred from homology"/>
<keyword id="KW-0963">Cytoplasm</keyword>
<keyword id="KW-0342">GTP-binding</keyword>
<keyword id="KW-0436">Ligase</keyword>
<keyword id="KW-0460">Magnesium</keyword>
<keyword id="KW-0479">Metal-binding</keyword>
<keyword id="KW-0547">Nucleotide-binding</keyword>
<keyword id="KW-0658">Purine biosynthesis</keyword>
<protein>
    <recommendedName>
        <fullName evidence="1">Adenylosuccinate synthetase</fullName>
        <shortName evidence="1">AMPSase</shortName>
        <shortName evidence="1">AdSS</shortName>
        <ecNumber evidence="1">6.3.4.4</ecNumber>
    </recommendedName>
    <alternativeName>
        <fullName evidence="1">IMP--aspartate ligase</fullName>
    </alternativeName>
</protein>
<gene>
    <name evidence="1" type="primary">purA</name>
    <name type="ordered locus">WP0039</name>
</gene>
<organism>
    <name type="scientific">Wolbachia pipientis subsp. Culex pipiens (strain wPip)</name>
    <dbReference type="NCBI Taxonomy" id="570417"/>
    <lineage>
        <taxon>Bacteria</taxon>
        <taxon>Pseudomonadati</taxon>
        <taxon>Pseudomonadota</taxon>
        <taxon>Alphaproteobacteria</taxon>
        <taxon>Rickettsiales</taxon>
        <taxon>Anaplasmataceae</taxon>
        <taxon>Wolbachieae</taxon>
        <taxon>Wolbachia</taxon>
    </lineage>
</organism>
<dbReference type="EC" id="6.3.4.4" evidence="1"/>
<dbReference type="EMBL" id="AM999887">
    <property type="protein sequence ID" value="CAQ54148.1"/>
    <property type="molecule type" value="Genomic_DNA"/>
</dbReference>
<dbReference type="RefSeq" id="WP_007302822.1">
    <property type="nucleotide sequence ID" value="NC_010981.1"/>
</dbReference>
<dbReference type="SMR" id="B3CL83"/>
<dbReference type="KEGG" id="wpi:WP0039"/>
<dbReference type="eggNOG" id="COG0104">
    <property type="taxonomic scope" value="Bacteria"/>
</dbReference>
<dbReference type="HOGENOM" id="CLU_029848_0_0_5"/>
<dbReference type="UniPathway" id="UPA00075">
    <property type="reaction ID" value="UER00335"/>
</dbReference>
<dbReference type="Proteomes" id="UP000008814">
    <property type="component" value="Chromosome"/>
</dbReference>
<dbReference type="GO" id="GO:0005737">
    <property type="term" value="C:cytoplasm"/>
    <property type="evidence" value="ECO:0007669"/>
    <property type="project" value="UniProtKB-SubCell"/>
</dbReference>
<dbReference type="GO" id="GO:0004019">
    <property type="term" value="F:adenylosuccinate synthase activity"/>
    <property type="evidence" value="ECO:0007669"/>
    <property type="project" value="UniProtKB-UniRule"/>
</dbReference>
<dbReference type="GO" id="GO:0005525">
    <property type="term" value="F:GTP binding"/>
    <property type="evidence" value="ECO:0007669"/>
    <property type="project" value="UniProtKB-UniRule"/>
</dbReference>
<dbReference type="GO" id="GO:0000287">
    <property type="term" value="F:magnesium ion binding"/>
    <property type="evidence" value="ECO:0007669"/>
    <property type="project" value="UniProtKB-UniRule"/>
</dbReference>
<dbReference type="GO" id="GO:0044208">
    <property type="term" value="P:'de novo' AMP biosynthetic process"/>
    <property type="evidence" value="ECO:0007669"/>
    <property type="project" value="UniProtKB-UniRule"/>
</dbReference>
<dbReference type="GO" id="GO:0046040">
    <property type="term" value="P:IMP metabolic process"/>
    <property type="evidence" value="ECO:0007669"/>
    <property type="project" value="TreeGrafter"/>
</dbReference>
<dbReference type="CDD" id="cd03108">
    <property type="entry name" value="AdSS"/>
    <property type="match status" value="1"/>
</dbReference>
<dbReference type="FunFam" id="1.10.300.10:FF:000001">
    <property type="entry name" value="Adenylosuccinate synthetase"/>
    <property type="match status" value="1"/>
</dbReference>
<dbReference type="FunFam" id="3.90.170.10:FF:000001">
    <property type="entry name" value="Adenylosuccinate synthetase"/>
    <property type="match status" value="1"/>
</dbReference>
<dbReference type="Gene3D" id="3.40.440.10">
    <property type="entry name" value="Adenylosuccinate Synthetase, subunit A, domain 1"/>
    <property type="match status" value="1"/>
</dbReference>
<dbReference type="Gene3D" id="1.10.300.10">
    <property type="entry name" value="Adenylosuccinate Synthetase, subunit A, domain 2"/>
    <property type="match status" value="1"/>
</dbReference>
<dbReference type="Gene3D" id="3.90.170.10">
    <property type="entry name" value="Adenylosuccinate Synthetase, subunit A, domain 3"/>
    <property type="match status" value="1"/>
</dbReference>
<dbReference type="HAMAP" id="MF_00011">
    <property type="entry name" value="Adenylosucc_synth"/>
    <property type="match status" value="1"/>
</dbReference>
<dbReference type="InterPro" id="IPR018220">
    <property type="entry name" value="Adenylosuccin_syn_GTP-bd"/>
</dbReference>
<dbReference type="InterPro" id="IPR033128">
    <property type="entry name" value="Adenylosuccin_syn_Lys_AS"/>
</dbReference>
<dbReference type="InterPro" id="IPR042109">
    <property type="entry name" value="Adenylosuccinate_synth_dom1"/>
</dbReference>
<dbReference type="InterPro" id="IPR042110">
    <property type="entry name" value="Adenylosuccinate_synth_dom2"/>
</dbReference>
<dbReference type="InterPro" id="IPR042111">
    <property type="entry name" value="Adenylosuccinate_synth_dom3"/>
</dbReference>
<dbReference type="InterPro" id="IPR001114">
    <property type="entry name" value="Adenylosuccinate_synthetase"/>
</dbReference>
<dbReference type="InterPro" id="IPR027417">
    <property type="entry name" value="P-loop_NTPase"/>
</dbReference>
<dbReference type="NCBIfam" id="NF002223">
    <property type="entry name" value="PRK01117.1"/>
    <property type="match status" value="1"/>
</dbReference>
<dbReference type="NCBIfam" id="TIGR00184">
    <property type="entry name" value="purA"/>
    <property type="match status" value="1"/>
</dbReference>
<dbReference type="PANTHER" id="PTHR11846">
    <property type="entry name" value="ADENYLOSUCCINATE SYNTHETASE"/>
    <property type="match status" value="1"/>
</dbReference>
<dbReference type="PANTHER" id="PTHR11846:SF0">
    <property type="entry name" value="ADENYLOSUCCINATE SYNTHETASE"/>
    <property type="match status" value="1"/>
</dbReference>
<dbReference type="Pfam" id="PF00709">
    <property type="entry name" value="Adenylsucc_synt"/>
    <property type="match status" value="1"/>
</dbReference>
<dbReference type="SMART" id="SM00788">
    <property type="entry name" value="Adenylsucc_synt"/>
    <property type="match status" value="1"/>
</dbReference>
<dbReference type="SUPFAM" id="SSF52540">
    <property type="entry name" value="P-loop containing nucleoside triphosphate hydrolases"/>
    <property type="match status" value="1"/>
</dbReference>
<dbReference type="PROSITE" id="PS01266">
    <property type="entry name" value="ADENYLOSUCCIN_SYN_1"/>
    <property type="match status" value="1"/>
</dbReference>
<dbReference type="PROSITE" id="PS00513">
    <property type="entry name" value="ADENYLOSUCCIN_SYN_2"/>
    <property type="match status" value="1"/>
</dbReference>
<name>PURA_WOLPP</name>